<name>MTB_COLVI</name>
<reference key="1">
    <citation type="journal article" date="1993" name="J. Mol. Evol.">
        <title>Evolution of avian metallothionein: DNA sequence analyses of the turkey metallothionein gene and metallothionein cDNAs from pheasant and quail.</title>
        <authorList>
            <person name="Shartzer K.L."/>
            <person name="Kage K."/>
            <person name="Sobieski R.J."/>
            <person name="Andrews G.K."/>
        </authorList>
    </citation>
    <scope>NUCLEOTIDE SEQUENCE [MRNA]</scope>
    <source>
        <tissue>Liver</tissue>
    </source>
</reference>
<sequence>SCAGSCKCKNCRCRSCRKSCCSCCPAGCNNCVKGCVCKEPASS</sequence>
<proteinExistence type="evidence at transcript level"/>
<evidence type="ECO:0000250" key="1">
    <source>
        <dbReference type="UniProtKB" id="P02795"/>
    </source>
</evidence>
<evidence type="ECO:0000305" key="2"/>
<organism>
    <name type="scientific">Colinus virginianus</name>
    <name type="common">Northern bobwhite</name>
    <name type="synonym">Tetrao virginianus</name>
    <dbReference type="NCBI Taxonomy" id="9014"/>
    <lineage>
        <taxon>Eukaryota</taxon>
        <taxon>Metazoa</taxon>
        <taxon>Chordata</taxon>
        <taxon>Craniata</taxon>
        <taxon>Vertebrata</taxon>
        <taxon>Euteleostomi</taxon>
        <taxon>Archelosauria</taxon>
        <taxon>Archosauria</taxon>
        <taxon>Dinosauria</taxon>
        <taxon>Saurischia</taxon>
        <taxon>Theropoda</taxon>
        <taxon>Coelurosauria</taxon>
        <taxon>Aves</taxon>
        <taxon>Neognathae</taxon>
        <taxon>Galloanserae</taxon>
        <taxon>Galliformes</taxon>
        <taxon>Odontophoridae</taxon>
        <taxon>Colinus</taxon>
    </lineage>
</organism>
<feature type="chain" id="PRO_0000197264" description="Metallothionein B">
    <location>
        <begin position="1" status="less than"/>
        <end position="43" status="greater than"/>
    </location>
</feature>
<feature type="region of interest" description="Beta">
    <location>
        <begin position="1" status="less than"/>
        <end position="16"/>
    </location>
</feature>
<feature type="region of interest" description="Alpha">
    <location>
        <begin position="17"/>
        <end position="43" status="greater than"/>
    </location>
</feature>
<feature type="binding site" evidence="1">
    <location>
        <position position="2"/>
    </location>
    <ligand>
        <name>a divalent metal cation</name>
        <dbReference type="ChEBI" id="CHEBI:60240"/>
        <label>2</label>
        <note>in cluster B</note>
    </ligand>
</feature>
<feature type="binding site" evidence="1">
    <location>
        <position position="2"/>
    </location>
    <ligand>
        <name>a divalent metal cation</name>
        <dbReference type="ChEBI" id="CHEBI:60240"/>
        <label>3</label>
        <note>in cluster B</note>
    </ligand>
</feature>
<feature type="binding site" evidence="1">
    <location>
        <position position="6"/>
    </location>
    <ligand>
        <name>a divalent metal cation</name>
        <dbReference type="ChEBI" id="CHEBI:60240"/>
        <label>3</label>
        <note>in cluster B</note>
    </ligand>
</feature>
<feature type="binding site" evidence="1">
    <location>
        <position position="8"/>
    </location>
    <ligand>
        <name>a divalent metal cation</name>
        <dbReference type="ChEBI" id="CHEBI:60240"/>
        <label>1</label>
        <note>in cluster B</note>
    </ligand>
</feature>
<feature type="binding site" evidence="1">
    <location>
        <position position="11"/>
    </location>
    <ligand>
        <name>a divalent metal cation</name>
        <dbReference type="ChEBI" id="CHEBI:60240"/>
        <label>1</label>
        <note>in cluster B</note>
    </ligand>
</feature>
<feature type="binding site" evidence="1">
    <location>
        <position position="11"/>
    </location>
    <ligand>
        <name>a divalent metal cation</name>
        <dbReference type="ChEBI" id="CHEBI:60240"/>
        <label>3</label>
        <note>in cluster B</note>
    </ligand>
</feature>
<feature type="binding site" evidence="1">
    <location>
        <position position="13"/>
    </location>
    <ligand>
        <name>a divalent metal cation</name>
        <dbReference type="ChEBI" id="CHEBI:60240"/>
        <label>2</label>
        <note>in cluster B</note>
    </ligand>
</feature>
<feature type="binding site" evidence="1">
    <location>
        <position position="16"/>
    </location>
    <ligand>
        <name>a divalent metal cation</name>
        <dbReference type="ChEBI" id="CHEBI:60240"/>
        <label>3</label>
        <note>in cluster B</note>
    </ligand>
</feature>
<feature type="binding site" evidence="1">
    <location>
        <position position="20"/>
    </location>
    <ligand>
        <name>a divalent metal cation</name>
        <dbReference type="ChEBI" id="CHEBI:60240"/>
        <label>4</label>
        <note>in cluster A</note>
    </ligand>
</feature>
<feature type="binding site" evidence="1">
    <location>
        <position position="21"/>
    </location>
    <ligand>
        <name>a divalent metal cation</name>
        <dbReference type="ChEBI" id="CHEBI:60240"/>
        <label>4</label>
        <note>in cluster A</note>
    </ligand>
</feature>
<feature type="binding site" evidence="1">
    <location>
        <position position="21"/>
    </location>
    <ligand>
        <name>a divalent metal cation</name>
        <dbReference type="ChEBI" id="CHEBI:60240"/>
        <label>5</label>
        <note>in cluster A</note>
    </ligand>
</feature>
<feature type="binding site" evidence="1">
    <location>
        <position position="23"/>
    </location>
    <ligand>
        <name>a divalent metal cation</name>
        <dbReference type="ChEBI" id="CHEBI:60240"/>
        <label>5</label>
        <note>in cluster A</note>
    </ligand>
</feature>
<feature type="binding site" evidence="1">
    <location>
        <position position="24"/>
    </location>
    <ligand>
        <name>a divalent metal cation</name>
        <dbReference type="ChEBI" id="CHEBI:60240"/>
        <label>5</label>
        <note>in cluster A</note>
    </ligand>
</feature>
<feature type="binding site" evidence="1">
    <location>
        <position position="24"/>
    </location>
    <ligand>
        <name>a divalent metal cation</name>
        <dbReference type="ChEBI" id="CHEBI:60240"/>
        <label>6</label>
        <note>in cluster A</note>
    </ligand>
</feature>
<feature type="binding site" evidence="1">
    <location>
        <position position="28"/>
    </location>
    <ligand>
        <name>a divalent metal cation</name>
        <dbReference type="ChEBI" id="CHEBI:60240"/>
        <label>6</label>
        <note>in cluster A</note>
    </ligand>
</feature>
<feature type="binding site" evidence="1">
    <location>
        <position position="31"/>
    </location>
    <ligand>
        <name>a divalent metal cation</name>
        <dbReference type="ChEBI" id="CHEBI:60240"/>
        <label>4</label>
        <note>in cluster A</note>
    </ligand>
</feature>
<feature type="binding site" evidence="1">
    <location>
        <position position="31"/>
    </location>
    <ligand>
        <name>a divalent metal cation</name>
        <dbReference type="ChEBI" id="CHEBI:60240"/>
        <label>6</label>
        <note>in cluster A</note>
    </ligand>
</feature>
<feature type="binding site" evidence="1">
    <location>
        <position position="35"/>
    </location>
    <ligand>
        <name>a divalent metal cation</name>
        <dbReference type="ChEBI" id="CHEBI:60240"/>
        <label>4</label>
        <note>in cluster A</note>
    </ligand>
</feature>
<feature type="binding site" evidence="1">
    <location>
        <position position="37"/>
    </location>
    <ligand>
        <name>a divalent metal cation</name>
        <dbReference type="ChEBI" id="CHEBI:60240"/>
        <label>5</label>
        <note>in cluster A</note>
    </ligand>
</feature>
<feature type="binding site" evidence="1">
    <location>
        <position position="37"/>
    </location>
    <ligand>
        <name>a divalent metal cation</name>
        <dbReference type="ChEBI" id="CHEBI:60240"/>
        <label>7</label>
        <note>in cluster A</note>
    </ligand>
</feature>
<feature type="non-terminal residue">
    <location>
        <position position="1"/>
    </location>
</feature>
<feature type="non-terminal residue">
    <location>
        <position position="43"/>
    </location>
</feature>
<dbReference type="EMBL" id="X62512">
    <property type="protein sequence ID" value="CAA44371.1"/>
    <property type="molecule type" value="mRNA"/>
</dbReference>
<dbReference type="PIR" id="S33379">
    <property type="entry name" value="S18174"/>
</dbReference>
<dbReference type="SMR" id="P27087"/>
<dbReference type="GO" id="GO:0005737">
    <property type="term" value="C:cytoplasm"/>
    <property type="evidence" value="ECO:0007669"/>
    <property type="project" value="TreeGrafter"/>
</dbReference>
<dbReference type="GO" id="GO:0005634">
    <property type="term" value="C:nucleus"/>
    <property type="evidence" value="ECO:0007669"/>
    <property type="project" value="TreeGrafter"/>
</dbReference>
<dbReference type="GO" id="GO:0046872">
    <property type="term" value="F:metal ion binding"/>
    <property type="evidence" value="ECO:0007669"/>
    <property type="project" value="UniProtKB-KW"/>
</dbReference>
<dbReference type="GO" id="GO:0071276">
    <property type="term" value="P:cellular response to cadmium ion"/>
    <property type="evidence" value="ECO:0007669"/>
    <property type="project" value="TreeGrafter"/>
</dbReference>
<dbReference type="GO" id="GO:0071280">
    <property type="term" value="P:cellular response to copper ion"/>
    <property type="evidence" value="ECO:0007669"/>
    <property type="project" value="TreeGrafter"/>
</dbReference>
<dbReference type="GO" id="GO:0071294">
    <property type="term" value="P:cellular response to zinc ion"/>
    <property type="evidence" value="ECO:0007669"/>
    <property type="project" value="TreeGrafter"/>
</dbReference>
<dbReference type="GO" id="GO:0010273">
    <property type="term" value="P:detoxification of copper ion"/>
    <property type="evidence" value="ECO:0007669"/>
    <property type="project" value="TreeGrafter"/>
</dbReference>
<dbReference type="GO" id="GO:0006882">
    <property type="term" value="P:intracellular zinc ion homeostasis"/>
    <property type="evidence" value="ECO:0007669"/>
    <property type="project" value="TreeGrafter"/>
</dbReference>
<dbReference type="FunFam" id="4.10.10.10:FF:000001">
    <property type="entry name" value="Metallothionein"/>
    <property type="match status" value="1"/>
</dbReference>
<dbReference type="Gene3D" id="4.10.10.10">
    <property type="entry name" value="Metallothionein Isoform II"/>
    <property type="match status" value="1"/>
</dbReference>
<dbReference type="InterPro" id="IPR017854">
    <property type="entry name" value="Metalthion_dom_sf"/>
</dbReference>
<dbReference type="InterPro" id="IPR023587">
    <property type="entry name" value="Metalthion_dom_sf_vert"/>
</dbReference>
<dbReference type="InterPro" id="IPR000006">
    <property type="entry name" value="Metalthion_vert"/>
</dbReference>
<dbReference type="PANTHER" id="PTHR23299">
    <property type="entry name" value="METALLOTHIONEIN"/>
    <property type="match status" value="1"/>
</dbReference>
<dbReference type="PANTHER" id="PTHR23299:SF24">
    <property type="entry name" value="METALLOTHIONEIN-1X"/>
    <property type="match status" value="1"/>
</dbReference>
<dbReference type="Pfam" id="PF00131">
    <property type="entry name" value="Metallothio"/>
    <property type="match status" value="1"/>
</dbReference>
<dbReference type="PRINTS" id="PR00860">
    <property type="entry name" value="MTVERTEBRATE"/>
</dbReference>
<dbReference type="SUPFAM" id="SSF57868">
    <property type="entry name" value="Metallothionein"/>
    <property type="match status" value="1"/>
</dbReference>
<keyword id="KW-0479">Metal-binding</keyword>
<keyword id="KW-0480">Metal-thiolate cluster</keyword>
<accession>P27087</accession>
<comment type="function">
    <text>Metallothioneins have a high content of cysteine residues that bind various heavy metals.</text>
</comment>
<comment type="domain">
    <text>Class I metallothioneins contain 2 metal-binding domains: four divalent ions are chelated within cluster A of the alpha domain and are coordinated via cysteinyl thiolate bridges to 11 cysteine ligands. Cluster B, the corresponding region within the beta domain, can ligate three divalent ions to 9 cysteines.</text>
</comment>
<comment type="similarity">
    <text evidence="2">Belongs to the metallothionein superfamily. Type 1 family.</text>
</comment>
<protein>
    <recommendedName>
        <fullName>Metallothionein B</fullName>
        <shortName>MTB</shortName>
    </recommendedName>
</protein>